<gene>
    <name evidence="1" type="primary">ureF</name>
    <name type="ordered locus">YpAngola_A3558</name>
</gene>
<organism>
    <name type="scientific">Yersinia pestis bv. Antiqua (strain Angola)</name>
    <dbReference type="NCBI Taxonomy" id="349746"/>
    <lineage>
        <taxon>Bacteria</taxon>
        <taxon>Pseudomonadati</taxon>
        <taxon>Pseudomonadota</taxon>
        <taxon>Gammaproteobacteria</taxon>
        <taxon>Enterobacterales</taxon>
        <taxon>Yersiniaceae</taxon>
        <taxon>Yersinia</taxon>
    </lineage>
</organism>
<evidence type="ECO:0000255" key="1">
    <source>
        <dbReference type="HAMAP-Rule" id="MF_01385"/>
    </source>
</evidence>
<proteinExistence type="inferred from homology"/>
<dbReference type="EMBL" id="CP000901">
    <property type="protein sequence ID" value="ABX85996.1"/>
    <property type="molecule type" value="Genomic_DNA"/>
</dbReference>
<dbReference type="RefSeq" id="WP_002212231.1">
    <property type="nucleotide sequence ID" value="NZ_CP009935.1"/>
</dbReference>
<dbReference type="SMR" id="A9R3V2"/>
<dbReference type="KEGG" id="ypg:YpAngola_A3558"/>
<dbReference type="PATRIC" id="fig|349746.12.peg.252"/>
<dbReference type="GO" id="GO:0005737">
    <property type="term" value="C:cytoplasm"/>
    <property type="evidence" value="ECO:0007669"/>
    <property type="project" value="UniProtKB-SubCell"/>
</dbReference>
<dbReference type="GO" id="GO:0016151">
    <property type="term" value="F:nickel cation binding"/>
    <property type="evidence" value="ECO:0007669"/>
    <property type="project" value="UniProtKB-UniRule"/>
</dbReference>
<dbReference type="Gene3D" id="1.10.4190.10">
    <property type="entry name" value="Urease accessory protein UreF"/>
    <property type="match status" value="1"/>
</dbReference>
<dbReference type="HAMAP" id="MF_01385">
    <property type="entry name" value="UreF"/>
    <property type="match status" value="1"/>
</dbReference>
<dbReference type="InterPro" id="IPR002639">
    <property type="entry name" value="UreF"/>
</dbReference>
<dbReference type="InterPro" id="IPR038277">
    <property type="entry name" value="UreF_sf"/>
</dbReference>
<dbReference type="PANTHER" id="PTHR33620">
    <property type="entry name" value="UREASE ACCESSORY PROTEIN F"/>
    <property type="match status" value="1"/>
</dbReference>
<dbReference type="PANTHER" id="PTHR33620:SF1">
    <property type="entry name" value="UREASE ACCESSORY PROTEIN F"/>
    <property type="match status" value="1"/>
</dbReference>
<dbReference type="Pfam" id="PF01730">
    <property type="entry name" value="UreF"/>
    <property type="match status" value="1"/>
</dbReference>
<dbReference type="PIRSF" id="PIRSF009467">
    <property type="entry name" value="Ureas_acces_UreF"/>
    <property type="match status" value="1"/>
</dbReference>
<accession>A9R3V2</accession>
<comment type="function">
    <text evidence="1">Required for maturation of urease via the functional incorporation of the urease nickel metallocenter.</text>
</comment>
<comment type="subunit">
    <text evidence="1">UreD, UreF and UreG form a complex that acts as a GTP-hydrolysis-dependent molecular chaperone, activating the urease apoprotein by helping to assemble the nickel containing metallocenter of UreC. The UreE protein probably delivers the nickel.</text>
</comment>
<comment type="subcellular location">
    <subcellularLocation>
        <location evidence="1">Cytoplasm</location>
    </subcellularLocation>
</comment>
<comment type="similarity">
    <text evidence="1">Belongs to the UreF family.</text>
</comment>
<keyword id="KW-0143">Chaperone</keyword>
<keyword id="KW-0963">Cytoplasm</keyword>
<keyword id="KW-0996">Nickel insertion</keyword>
<name>UREF_YERPG</name>
<reference key="1">
    <citation type="journal article" date="2010" name="J. Bacteriol.">
        <title>Genome sequence of the deep-rooted Yersinia pestis strain Angola reveals new insights into the evolution and pangenome of the plague bacterium.</title>
        <authorList>
            <person name="Eppinger M."/>
            <person name="Worsham P.L."/>
            <person name="Nikolich M.P."/>
            <person name="Riley D.R."/>
            <person name="Sebastian Y."/>
            <person name="Mou S."/>
            <person name="Achtman M."/>
            <person name="Lindler L.E."/>
            <person name="Ravel J."/>
        </authorList>
    </citation>
    <scope>NUCLEOTIDE SEQUENCE [LARGE SCALE GENOMIC DNA]</scope>
    <source>
        <strain>Angola</strain>
    </source>
</reference>
<sequence length="228" mass="25037">MNASDLIRIMQFGDSVLPVGAFTFSNGVESAIQTGIVHDVATLKGFVLTALKQAASCDGMGVVVAHRAVVADDRDGIIRADWAVNNRKLNEESRLMATRMGKKLAEMSIHVVEHPLISWWLEQIKNGNTAGTYPVTQAVVMAAQGIGQREVVVMHQYGVAMTILSAAMRLMRVTHFDTQHILFELNHDIEKFCDIAEIGDINQMSSYVPIVDVLAAVHVKAHVRLFSN</sequence>
<feature type="chain" id="PRO_1000145149" description="Urease accessory protein UreF">
    <location>
        <begin position="1"/>
        <end position="228"/>
    </location>
</feature>
<protein>
    <recommendedName>
        <fullName evidence="1">Urease accessory protein UreF</fullName>
    </recommendedName>
</protein>